<protein>
    <recommendedName>
        <fullName>Double gene block protein 2</fullName>
        <shortName>DGBp2</shortName>
    </recommendedName>
    <alternativeName>
        <fullName>Movement protein P7B</fullName>
    </alternativeName>
</protein>
<keyword id="KW-1038">Host endoplasmic reticulum</keyword>
<keyword id="KW-1043">Host membrane</keyword>
<keyword id="KW-0472">Membrane</keyword>
<keyword id="KW-1185">Reference proteome</keyword>
<keyword id="KW-0735">Signal-anchor</keyword>
<keyword id="KW-0812">Transmembrane</keyword>
<keyword id="KW-1133">Transmembrane helix</keyword>
<keyword id="KW-0813">Transport</keyword>
<keyword id="KW-0916">Viral movement protein</keyword>
<organism>
    <name type="scientific">Melon necrotic spot virus</name>
    <name type="common">MNSV</name>
    <dbReference type="NCBI Taxonomy" id="11987"/>
    <lineage>
        <taxon>Viruses</taxon>
        <taxon>Riboviria</taxon>
        <taxon>Orthornavirae</taxon>
        <taxon>Kitrinoviricota</taxon>
        <taxon>Tolucaviricetes</taxon>
        <taxon>Tolivirales</taxon>
        <taxon>Tombusviridae</taxon>
        <taxon>Procedovirinae</taxon>
        <taxon>Gammacarmovirus</taxon>
        <taxon>Gammacarmovirus melonis</taxon>
    </lineage>
</organism>
<accession>Q89846</accession>
<sequence length="61" mass="6606">MACCRCDSSPGDYSGALLILFISFVFFYITSLSPQGNTYVHHFDSSSVKTQYVGISTNGDG</sequence>
<dbReference type="EMBL" id="M29671">
    <property type="protein sequence ID" value="AAB02434.1"/>
    <property type="molecule type" value="Genomic_RNA"/>
</dbReference>
<dbReference type="EMBL" id="D12536">
    <property type="protein sequence ID" value="BAA02103.1"/>
    <property type="molecule type" value="Genomic_RNA"/>
</dbReference>
<dbReference type="KEGG" id="vg:1491980"/>
<dbReference type="Proteomes" id="UP000202003">
    <property type="component" value="Genome"/>
</dbReference>
<dbReference type="GO" id="GO:0044167">
    <property type="term" value="C:host cell endoplasmic reticulum membrane"/>
    <property type="evidence" value="ECO:0007669"/>
    <property type="project" value="UniProtKB-SubCell"/>
</dbReference>
<dbReference type="GO" id="GO:0016020">
    <property type="term" value="C:membrane"/>
    <property type="evidence" value="ECO:0007669"/>
    <property type="project" value="UniProtKB-KW"/>
</dbReference>
<dbReference type="GO" id="GO:0046740">
    <property type="term" value="P:transport of virus in host, cell to cell"/>
    <property type="evidence" value="ECO:0007669"/>
    <property type="project" value="UniProtKB-KW"/>
</dbReference>
<dbReference type="InterPro" id="IPR009575">
    <property type="entry name" value="MNSV_P7B"/>
</dbReference>
<dbReference type="Pfam" id="PF06692">
    <property type="entry name" value="MNSV_P7B"/>
    <property type="match status" value="1"/>
</dbReference>
<feature type="chain" id="PRO_0000398308" description="Double gene block protein 2">
    <location>
        <begin position="1"/>
        <end position="61"/>
    </location>
</feature>
<feature type="topological domain" description="Cytoplasmic" evidence="4">
    <location>
        <begin position="1"/>
        <end position="12"/>
    </location>
</feature>
<feature type="transmembrane region" description="Helical; Signal-anchor for type II membrane protein" evidence="1">
    <location>
        <begin position="13"/>
        <end position="33"/>
    </location>
</feature>
<feature type="topological domain" description="Lumenal" evidence="4">
    <location>
        <begin position="34"/>
        <end position="61"/>
    </location>
</feature>
<reference key="1">
    <citation type="journal article" date="1990" name="J. Gen. Virol.">
        <title>Nucleotide sequence and genomic organization of melon necrotic spot virus.</title>
        <authorList>
            <person name="Riviere C.J."/>
            <person name="Rochon D.M."/>
        </authorList>
    </citation>
    <scope>NUCLEOTIDE SEQUENCE [GENOMIC RNA]</scope>
</reference>
<reference key="2">
    <citation type="journal article" date="2007" name="Virology">
        <title>Membrane insertion and topology of the p7B movement protein of melon necrotic spot virus (MNSV).</title>
        <authorList>
            <person name="Martinez-Gil L."/>
            <person name="Sauri A."/>
            <person name="Vilar M."/>
            <person name="Pallas V."/>
            <person name="Mingarro I."/>
        </authorList>
    </citation>
    <scope>TOPOLOGY</scope>
    <scope>SUBCELLULAR LOCATION</scope>
</reference>
<gene>
    <name type="ORF">ORF3</name>
</gene>
<comment type="function">
    <text evidence="3">Cell-to-cell movement function.</text>
</comment>
<comment type="subcellular location">
    <subcellularLocation>
        <location evidence="2">Host endoplasmic reticulum membrane</location>
        <topology evidence="2">Single-pass type II membrane protein</topology>
    </subcellularLocation>
</comment>
<comment type="similarity">
    <text evidence="3">Belongs to the gammacarmovirus double gene block protein 2 family.</text>
</comment>
<proteinExistence type="evidence at protein level"/>
<evidence type="ECO:0000255" key="1"/>
<evidence type="ECO:0000269" key="2">
    <source>
    </source>
</evidence>
<evidence type="ECO:0000305" key="3"/>
<evidence type="ECO:0000305" key="4">
    <source>
    </source>
</evidence>
<name>MP2_MNSV</name>
<organismHost>
    <name type="scientific">Cucumis melo</name>
    <name type="common">Muskmelon</name>
    <dbReference type="NCBI Taxonomy" id="3656"/>
</organismHost>
<organismHost>
    <name type="scientific">Cucumis sativus</name>
    <name type="common">Cucumber</name>
    <dbReference type="NCBI Taxonomy" id="3659"/>
</organismHost>